<proteinExistence type="inferred from homology"/>
<comment type="function">
    <text evidence="1">Essential for recycling GMP and indirectly, cGMP.</text>
</comment>
<comment type="catalytic activity">
    <reaction evidence="1">
        <text>GMP + ATP = GDP + ADP</text>
        <dbReference type="Rhea" id="RHEA:20780"/>
        <dbReference type="ChEBI" id="CHEBI:30616"/>
        <dbReference type="ChEBI" id="CHEBI:58115"/>
        <dbReference type="ChEBI" id="CHEBI:58189"/>
        <dbReference type="ChEBI" id="CHEBI:456216"/>
        <dbReference type="EC" id="2.7.4.8"/>
    </reaction>
</comment>
<comment type="subcellular location">
    <subcellularLocation>
        <location evidence="1">Cytoplasm</location>
    </subcellularLocation>
</comment>
<comment type="similarity">
    <text evidence="1">Belongs to the guanylate kinase family.</text>
</comment>
<gene>
    <name evidence="1" type="primary">gmk</name>
    <name type="ordered locus">XOO1145</name>
</gene>
<feature type="chain" id="PRO_0000266437" description="Guanylate kinase">
    <location>
        <begin position="1"/>
        <end position="203"/>
    </location>
</feature>
<feature type="domain" description="Guanylate kinase-like" evidence="1">
    <location>
        <begin position="3"/>
        <end position="181"/>
    </location>
</feature>
<feature type="binding site" evidence="1">
    <location>
        <begin position="10"/>
        <end position="17"/>
    </location>
    <ligand>
        <name>ATP</name>
        <dbReference type="ChEBI" id="CHEBI:30616"/>
    </ligand>
</feature>
<evidence type="ECO:0000255" key="1">
    <source>
        <dbReference type="HAMAP-Rule" id="MF_00328"/>
    </source>
</evidence>
<dbReference type="EC" id="2.7.4.8" evidence="1"/>
<dbReference type="EMBL" id="AE013598">
    <property type="protein sequence ID" value="AAW74399.1"/>
    <property type="molecule type" value="Genomic_DNA"/>
</dbReference>
<dbReference type="SMR" id="Q5H3S2"/>
<dbReference type="STRING" id="291331.XOO1145"/>
<dbReference type="KEGG" id="xoo:XOO1145"/>
<dbReference type="HOGENOM" id="CLU_001715_1_0_6"/>
<dbReference type="Proteomes" id="UP000006735">
    <property type="component" value="Chromosome"/>
</dbReference>
<dbReference type="GO" id="GO:0005829">
    <property type="term" value="C:cytosol"/>
    <property type="evidence" value="ECO:0007669"/>
    <property type="project" value="TreeGrafter"/>
</dbReference>
<dbReference type="GO" id="GO:0005524">
    <property type="term" value="F:ATP binding"/>
    <property type="evidence" value="ECO:0007669"/>
    <property type="project" value="UniProtKB-UniRule"/>
</dbReference>
<dbReference type="GO" id="GO:0004385">
    <property type="term" value="F:guanylate kinase activity"/>
    <property type="evidence" value="ECO:0007669"/>
    <property type="project" value="UniProtKB-UniRule"/>
</dbReference>
<dbReference type="CDD" id="cd00071">
    <property type="entry name" value="GMPK"/>
    <property type="match status" value="1"/>
</dbReference>
<dbReference type="FunFam" id="3.30.63.10:FF:000005">
    <property type="entry name" value="Guanylate kinase"/>
    <property type="match status" value="1"/>
</dbReference>
<dbReference type="FunFam" id="3.40.50.300:FF:000084">
    <property type="entry name" value="Guanylate kinase"/>
    <property type="match status" value="1"/>
</dbReference>
<dbReference type="Gene3D" id="3.30.63.10">
    <property type="entry name" value="Guanylate Kinase phosphate binding domain"/>
    <property type="match status" value="1"/>
</dbReference>
<dbReference type="Gene3D" id="3.40.50.300">
    <property type="entry name" value="P-loop containing nucleotide triphosphate hydrolases"/>
    <property type="match status" value="1"/>
</dbReference>
<dbReference type="HAMAP" id="MF_00328">
    <property type="entry name" value="Guanylate_kinase"/>
    <property type="match status" value="1"/>
</dbReference>
<dbReference type="InterPro" id="IPR008145">
    <property type="entry name" value="GK/Ca_channel_bsu"/>
</dbReference>
<dbReference type="InterPro" id="IPR008144">
    <property type="entry name" value="Guanylate_kin-like_dom"/>
</dbReference>
<dbReference type="InterPro" id="IPR017665">
    <property type="entry name" value="Guanylate_kinase"/>
</dbReference>
<dbReference type="InterPro" id="IPR027417">
    <property type="entry name" value="P-loop_NTPase"/>
</dbReference>
<dbReference type="NCBIfam" id="TIGR03263">
    <property type="entry name" value="guanyl_kin"/>
    <property type="match status" value="1"/>
</dbReference>
<dbReference type="PANTHER" id="PTHR23117:SF13">
    <property type="entry name" value="GUANYLATE KINASE"/>
    <property type="match status" value="1"/>
</dbReference>
<dbReference type="PANTHER" id="PTHR23117">
    <property type="entry name" value="GUANYLATE KINASE-RELATED"/>
    <property type="match status" value="1"/>
</dbReference>
<dbReference type="Pfam" id="PF00625">
    <property type="entry name" value="Guanylate_kin"/>
    <property type="match status" value="1"/>
</dbReference>
<dbReference type="SMART" id="SM00072">
    <property type="entry name" value="GuKc"/>
    <property type="match status" value="1"/>
</dbReference>
<dbReference type="SUPFAM" id="SSF52540">
    <property type="entry name" value="P-loop containing nucleoside triphosphate hydrolases"/>
    <property type="match status" value="1"/>
</dbReference>
<dbReference type="PROSITE" id="PS50052">
    <property type="entry name" value="GUANYLATE_KINASE_2"/>
    <property type="match status" value="1"/>
</dbReference>
<keyword id="KW-0067">ATP-binding</keyword>
<keyword id="KW-0963">Cytoplasm</keyword>
<keyword id="KW-0418">Kinase</keyword>
<keyword id="KW-0547">Nucleotide-binding</keyword>
<keyword id="KW-1185">Reference proteome</keyword>
<keyword id="KW-0808">Transferase</keyword>
<protein>
    <recommendedName>
        <fullName evidence="1">Guanylate kinase</fullName>
        <ecNumber evidence="1">2.7.4.8</ecNumber>
    </recommendedName>
    <alternativeName>
        <fullName evidence="1">GMP kinase</fullName>
    </alternativeName>
</protein>
<reference key="1">
    <citation type="journal article" date="2005" name="Nucleic Acids Res.">
        <title>The genome sequence of Xanthomonas oryzae pathovar oryzae KACC10331, the bacterial blight pathogen of rice.</title>
        <authorList>
            <person name="Lee B.-M."/>
            <person name="Park Y.-J."/>
            <person name="Park D.-S."/>
            <person name="Kang H.-W."/>
            <person name="Kim J.-G."/>
            <person name="Song E.-S."/>
            <person name="Park I.-C."/>
            <person name="Yoon U.-H."/>
            <person name="Hahn J.-H."/>
            <person name="Koo B.-S."/>
            <person name="Lee G.-B."/>
            <person name="Kim H."/>
            <person name="Park H.-S."/>
            <person name="Yoon K.-O."/>
            <person name="Kim J.-H."/>
            <person name="Jung C.-H."/>
            <person name="Koh N.-H."/>
            <person name="Seo J.-S."/>
            <person name="Go S.-J."/>
        </authorList>
    </citation>
    <scope>NUCLEOTIDE SEQUENCE [LARGE SCALE GENOMIC DNA]</scope>
    <source>
        <strain>KACC10331 / KXO85</strain>
    </source>
</reference>
<accession>Q5H3S2</accession>
<sequence length="203" mass="22696">MRGTLYIVAAPSGAGKSSIVNATLARDPKIALSISFTSRAPRPGERHSEHYHFVSAEEFQGMIAAGDFFEYALVHGDWKGTARQSVEPQLAAGHDVLLEIDWQGARQVRQKVPDAVSVFILPPSRQALDERMRKRGQDSEDVMAQRLAAAREEMLHFEEFDYVIINETFDTAVSEMCAIFTASRLRRQAQQQRHAGLIQALLD</sequence>
<organism>
    <name type="scientific">Xanthomonas oryzae pv. oryzae (strain KACC10331 / KXO85)</name>
    <dbReference type="NCBI Taxonomy" id="291331"/>
    <lineage>
        <taxon>Bacteria</taxon>
        <taxon>Pseudomonadati</taxon>
        <taxon>Pseudomonadota</taxon>
        <taxon>Gammaproteobacteria</taxon>
        <taxon>Lysobacterales</taxon>
        <taxon>Lysobacteraceae</taxon>
        <taxon>Xanthomonas</taxon>
    </lineage>
</organism>
<name>KGUA_XANOR</name>